<proteinExistence type="inferred from homology"/>
<evidence type="ECO:0000255" key="1">
    <source>
        <dbReference type="HAMAP-Rule" id="MF_00791"/>
    </source>
</evidence>
<gene>
    <name evidence="1" type="primary">apaG</name>
    <name type="ordered locus">PSPA7_0735</name>
</gene>
<organism>
    <name type="scientific">Pseudomonas paraeruginosa (strain DSM 24068 / PA7)</name>
    <name type="common">Pseudomonas aeruginosa (strain PA7)</name>
    <dbReference type="NCBI Taxonomy" id="381754"/>
    <lineage>
        <taxon>Bacteria</taxon>
        <taxon>Pseudomonadati</taxon>
        <taxon>Pseudomonadota</taxon>
        <taxon>Gammaproteobacteria</taxon>
        <taxon>Pseudomonadales</taxon>
        <taxon>Pseudomonadaceae</taxon>
        <taxon>Pseudomonas</taxon>
        <taxon>Pseudomonas paraeruginosa</taxon>
    </lineage>
</organism>
<feature type="chain" id="PRO_1000083631" description="Protein ApaG">
    <location>
        <begin position="1"/>
        <end position="126"/>
    </location>
</feature>
<feature type="domain" description="ApaG" evidence="1">
    <location>
        <begin position="2"/>
        <end position="126"/>
    </location>
</feature>
<dbReference type="EMBL" id="CP000744">
    <property type="protein sequence ID" value="ABR83374.1"/>
    <property type="molecule type" value="Genomic_DNA"/>
</dbReference>
<dbReference type="RefSeq" id="WP_012074175.1">
    <property type="nucleotide sequence ID" value="NC_009656.1"/>
</dbReference>
<dbReference type="SMR" id="A6UZ95"/>
<dbReference type="KEGG" id="pap:PSPA7_0735"/>
<dbReference type="HOGENOM" id="CLU_128074_0_0_6"/>
<dbReference type="Proteomes" id="UP000001582">
    <property type="component" value="Chromosome"/>
</dbReference>
<dbReference type="GO" id="GO:0070987">
    <property type="term" value="P:error-free translesion synthesis"/>
    <property type="evidence" value="ECO:0007669"/>
    <property type="project" value="TreeGrafter"/>
</dbReference>
<dbReference type="Gene3D" id="2.60.40.1470">
    <property type="entry name" value="ApaG domain"/>
    <property type="match status" value="1"/>
</dbReference>
<dbReference type="HAMAP" id="MF_00791">
    <property type="entry name" value="ApaG"/>
    <property type="match status" value="1"/>
</dbReference>
<dbReference type="InterPro" id="IPR007474">
    <property type="entry name" value="ApaG_domain"/>
</dbReference>
<dbReference type="InterPro" id="IPR036767">
    <property type="entry name" value="ApaG_sf"/>
</dbReference>
<dbReference type="InterPro" id="IPR023065">
    <property type="entry name" value="Uncharacterised_ApaG"/>
</dbReference>
<dbReference type="NCBIfam" id="NF003967">
    <property type="entry name" value="PRK05461.1"/>
    <property type="match status" value="1"/>
</dbReference>
<dbReference type="PANTHER" id="PTHR14289">
    <property type="entry name" value="F-BOX ONLY PROTEIN 3"/>
    <property type="match status" value="1"/>
</dbReference>
<dbReference type="PANTHER" id="PTHR14289:SF16">
    <property type="entry name" value="POLYMERASE DELTA-INTERACTING PROTEIN 2"/>
    <property type="match status" value="1"/>
</dbReference>
<dbReference type="Pfam" id="PF04379">
    <property type="entry name" value="DUF525"/>
    <property type="match status" value="1"/>
</dbReference>
<dbReference type="SUPFAM" id="SSF110069">
    <property type="entry name" value="ApaG-like"/>
    <property type="match status" value="1"/>
</dbReference>
<dbReference type="PROSITE" id="PS51087">
    <property type="entry name" value="APAG"/>
    <property type="match status" value="1"/>
</dbReference>
<accession>A6UZ95</accession>
<protein>
    <recommendedName>
        <fullName evidence="1">Protein ApaG</fullName>
    </recommendedName>
</protein>
<sequence length="126" mass="13626">MSDTQHQVNVRVDTRYLPEQSAPEQNRFAFAYTVTIENRGEVSAQLLSRHWIITDGDGRTQEVRGAGVVGEQPLIAPGAQHTYTSGTVLATRVGSMRGSYQMLGSDGVAFDAAIPVFRLAVPGALH</sequence>
<name>APAG_PSEP7</name>
<reference key="1">
    <citation type="submission" date="2007-06" db="EMBL/GenBank/DDBJ databases">
        <authorList>
            <person name="Dodson R.J."/>
            <person name="Harkins D."/>
            <person name="Paulsen I.T."/>
        </authorList>
    </citation>
    <scope>NUCLEOTIDE SEQUENCE [LARGE SCALE GENOMIC DNA]</scope>
    <source>
        <strain>DSM 24068 / PA7</strain>
    </source>
</reference>